<accession>B1KQ44</accession>
<dbReference type="EC" id="2.1.1.170" evidence="1"/>
<dbReference type="EMBL" id="CP000961">
    <property type="protein sequence ID" value="ACA89157.1"/>
    <property type="molecule type" value="Genomic_DNA"/>
</dbReference>
<dbReference type="RefSeq" id="WP_012327473.1">
    <property type="nucleotide sequence ID" value="NC_010506.1"/>
</dbReference>
<dbReference type="SMR" id="B1KQ44"/>
<dbReference type="STRING" id="392500.Swoo_4908"/>
<dbReference type="KEGG" id="swd:Swoo_4908"/>
<dbReference type="eggNOG" id="COG0357">
    <property type="taxonomic scope" value="Bacteria"/>
</dbReference>
<dbReference type="HOGENOM" id="CLU_065341_2_0_6"/>
<dbReference type="Proteomes" id="UP000002168">
    <property type="component" value="Chromosome"/>
</dbReference>
<dbReference type="GO" id="GO:0005829">
    <property type="term" value="C:cytosol"/>
    <property type="evidence" value="ECO:0007669"/>
    <property type="project" value="TreeGrafter"/>
</dbReference>
<dbReference type="GO" id="GO:0070043">
    <property type="term" value="F:rRNA (guanine-N7-)-methyltransferase activity"/>
    <property type="evidence" value="ECO:0007669"/>
    <property type="project" value="UniProtKB-UniRule"/>
</dbReference>
<dbReference type="CDD" id="cd02440">
    <property type="entry name" value="AdoMet_MTases"/>
    <property type="match status" value="1"/>
</dbReference>
<dbReference type="FunFam" id="3.40.50.150:FF:000032">
    <property type="entry name" value="Ribosomal RNA small subunit methyltransferase G"/>
    <property type="match status" value="1"/>
</dbReference>
<dbReference type="Gene3D" id="3.40.50.150">
    <property type="entry name" value="Vaccinia Virus protein VP39"/>
    <property type="match status" value="1"/>
</dbReference>
<dbReference type="HAMAP" id="MF_00074">
    <property type="entry name" value="16SrRNA_methyltr_G"/>
    <property type="match status" value="1"/>
</dbReference>
<dbReference type="InterPro" id="IPR003682">
    <property type="entry name" value="rRNA_ssu_MeTfrase_G"/>
</dbReference>
<dbReference type="InterPro" id="IPR029063">
    <property type="entry name" value="SAM-dependent_MTases_sf"/>
</dbReference>
<dbReference type="NCBIfam" id="TIGR00138">
    <property type="entry name" value="rsmG_gidB"/>
    <property type="match status" value="1"/>
</dbReference>
<dbReference type="PANTHER" id="PTHR31760">
    <property type="entry name" value="S-ADENOSYL-L-METHIONINE-DEPENDENT METHYLTRANSFERASES SUPERFAMILY PROTEIN"/>
    <property type="match status" value="1"/>
</dbReference>
<dbReference type="PANTHER" id="PTHR31760:SF0">
    <property type="entry name" value="S-ADENOSYL-L-METHIONINE-DEPENDENT METHYLTRANSFERASES SUPERFAMILY PROTEIN"/>
    <property type="match status" value="1"/>
</dbReference>
<dbReference type="Pfam" id="PF02527">
    <property type="entry name" value="GidB"/>
    <property type="match status" value="1"/>
</dbReference>
<dbReference type="PIRSF" id="PIRSF003078">
    <property type="entry name" value="GidB"/>
    <property type="match status" value="1"/>
</dbReference>
<dbReference type="SUPFAM" id="SSF53335">
    <property type="entry name" value="S-adenosyl-L-methionine-dependent methyltransferases"/>
    <property type="match status" value="1"/>
</dbReference>
<sequence length="206" mass="23449">MLSAQLDEYLAEMNLSATTEQKKQLVGFVEMLNKWNKAYNLTSIRDPQQMLIRHIMDSLAVSKHLVGERFIDVGTGPGLPGIPLAIMNPERSFVLLDSLGKRIRFQKQVQHELGIHNISSVESRVEAFEPEVKFDGVLSRAFASIEDMLHWCHHLPSETGCYYALKGQLADNEMANIPQGFEVTDIIELQVPRLDEQRHLLRVIKK</sequence>
<keyword id="KW-0963">Cytoplasm</keyword>
<keyword id="KW-0489">Methyltransferase</keyword>
<keyword id="KW-1185">Reference proteome</keyword>
<keyword id="KW-0698">rRNA processing</keyword>
<keyword id="KW-0949">S-adenosyl-L-methionine</keyword>
<keyword id="KW-0808">Transferase</keyword>
<reference key="1">
    <citation type="submission" date="2008-02" db="EMBL/GenBank/DDBJ databases">
        <title>Complete sequence of Shewanella woodyi ATCC 51908.</title>
        <authorList>
            <consortium name="US DOE Joint Genome Institute"/>
            <person name="Copeland A."/>
            <person name="Lucas S."/>
            <person name="Lapidus A."/>
            <person name="Glavina del Rio T."/>
            <person name="Dalin E."/>
            <person name="Tice H."/>
            <person name="Bruce D."/>
            <person name="Goodwin L."/>
            <person name="Pitluck S."/>
            <person name="Sims D."/>
            <person name="Brettin T."/>
            <person name="Detter J.C."/>
            <person name="Han C."/>
            <person name="Kuske C.R."/>
            <person name="Schmutz J."/>
            <person name="Larimer F."/>
            <person name="Land M."/>
            <person name="Hauser L."/>
            <person name="Kyrpides N."/>
            <person name="Lykidis A."/>
            <person name="Zhao J.-S."/>
            <person name="Richardson P."/>
        </authorList>
    </citation>
    <scope>NUCLEOTIDE SEQUENCE [LARGE SCALE GENOMIC DNA]</scope>
    <source>
        <strain>ATCC 51908 / MS32</strain>
    </source>
</reference>
<organism>
    <name type="scientific">Shewanella woodyi (strain ATCC 51908 / MS32)</name>
    <dbReference type="NCBI Taxonomy" id="392500"/>
    <lineage>
        <taxon>Bacteria</taxon>
        <taxon>Pseudomonadati</taxon>
        <taxon>Pseudomonadota</taxon>
        <taxon>Gammaproteobacteria</taxon>
        <taxon>Alteromonadales</taxon>
        <taxon>Shewanellaceae</taxon>
        <taxon>Shewanella</taxon>
    </lineage>
</organism>
<comment type="function">
    <text evidence="1">Specifically methylates the N7 position of guanine in position 527 of 16S rRNA.</text>
</comment>
<comment type="catalytic activity">
    <reaction evidence="1">
        <text>guanosine(527) in 16S rRNA + S-adenosyl-L-methionine = N(7)-methylguanosine(527) in 16S rRNA + S-adenosyl-L-homocysteine</text>
        <dbReference type="Rhea" id="RHEA:42732"/>
        <dbReference type="Rhea" id="RHEA-COMP:10209"/>
        <dbReference type="Rhea" id="RHEA-COMP:10210"/>
        <dbReference type="ChEBI" id="CHEBI:57856"/>
        <dbReference type="ChEBI" id="CHEBI:59789"/>
        <dbReference type="ChEBI" id="CHEBI:74269"/>
        <dbReference type="ChEBI" id="CHEBI:74480"/>
        <dbReference type="EC" id="2.1.1.170"/>
    </reaction>
</comment>
<comment type="subcellular location">
    <subcellularLocation>
        <location evidence="1">Cytoplasm</location>
    </subcellularLocation>
</comment>
<comment type="similarity">
    <text evidence="1">Belongs to the methyltransferase superfamily. RNA methyltransferase RsmG family.</text>
</comment>
<name>RSMG_SHEWM</name>
<feature type="chain" id="PRO_0000342937" description="Ribosomal RNA small subunit methyltransferase G">
    <location>
        <begin position="1"/>
        <end position="206"/>
    </location>
</feature>
<feature type="binding site" evidence="1">
    <location>
        <position position="74"/>
    </location>
    <ligand>
        <name>S-adenosyl-L-methionine</name>
        <dbReference type="ChEBI" id="CHEBI:59789"/>
    </ligand>
</feature>
<feature type="binding site" evidence="1">
    <location>
        <position position="79"/>
    </location>
    <ligand>
        <name>S-adenosyl-L-methionine</name>
        <dbReference type="ChEBI" id="CHEBI:59789"/>
    </ligand>
</feature>
<feature type="binding site" evidence="1">
    <location>
        <begin position="125"/>
        <end position="126"/>
    </location>
    <ligand>
        <name>S-adenosyl-L-methionine</name>
        <dbReference type="ChEBI" id="CHEBI:59789"/>
    </ligand>
</feature>
<feature type="binding site" evidence="1">
    <location>
        <position position="140"/>
    </location>
    <ligand>
        <name>S-adenosyl-L-methionine</name>
        <dbReference type="ChEBI" id="CHEBI:59789"/>
    </ligand>
</feature>
<gene>
    <name evidence="1" type="primary">rsmG</name>
    <name type="ordered locus">Swoo_4908</name>
</gene>
<protein>
    <recommendedName>
        <fullName evidence="1">Ribosomal RNA small subunit methyltransferase G</fullName>
        <ecNumber evidence="1">2.1.1.170</ecNumber>
    </recommendedName>
    <alternativeName>
        <fullName evidence="1">16S rRNA 7-methylguanosine methyltransferase</fullName>
        <shortName evidence="1">16S rRNA m7G methyltransferase</shortName>
    </alternativeName>
</protein>
<proteinExistence type="inferred from homology"/>
<evidence type="ECO:0000255" key="1">
    <source>
        <dbReference type="HAMAP-Rule" id="MF_00074"/>
    </source>
</evidence>